<name>Y486_FRATM</name>
<comment type="similarity">
    <text evidence="1">Belongs to the UPF0102 family.</text>
</comment>
<gene>
    <name type="ordered locus">FTM_0486</name>
</gene>
<accession>B2SF73</accession>
<dbReference type="EMBL" id="CP000915">
    <property type="protein sequence ID" value="ACD30505.1"/>
    <property type="molecule type" value="Genomic_DNA"/>
</dbReference>
<dbReference type="SMR" id="B2SF73"/>
<dbReference type="KEGG" id="ftm:FTM_0486"/>
<dbReference type="HOGENOM" id="CLU_115353_1_1_6"/>
<dbReference type="GO" id="GO:0003676">
    <property type="term" value="F:nucleic acid binding"/>
    <property type="evidence" value="ECO:0007669"/>
    <property type="project" value="InterPro"/>
</dbReference>
<dbReference type="Gene3D" id="3.40.1350.10">
    <property type="match status" value="1"/>
</dbReference>
<dbReference type="HAMAP" id="MF_00048">
    <property type="entry name" value="UPF0102"/>
    <property type="match status" value="1"/>
</dbReference>
<dbReference type="InterPro" id="IPR011335">
    <property type="entry name" value="Restrct_endonuc-II-like"/>
</dbReference>
<dbReference type="InterPro" id="IPR011856">
    <property type="entry name" value="tRNA_endonuc-like_dom_sf"/>
</dbReference>
<dbReference type="InterPro" id="IPR003509">
    <property type="entry name" value="UPF0102_YraN-like"/>
</dbReference>
<dbReference type="NCBIfam" id="NF009150">
    <property type="entry name" value="PRK12497.1-3"/>
    <property type="match status" value="1"/>
</dbReference>
<dbReference type="NCBIfam" id="NF011275">
    <property type="entry name" value="PRK14682.1"/>
    <property type="match status" value="1"/>
</dbReference>
<dbReference type="NCBIfam" id="TIGR00252">
    <property type="entry name" value="YraN family protein"/>
    <property type="match status" value="1"/>
</dbReference>
<dbReference type="PANTHER" id="PTHR34039">
    <property type="entry name" value="UPF0102 PROTEIN YRAN"/>
    <property type="match status" value="1"/>
</dbReference>
<dbReference type="PANTHER" id="PTHR34039:SF1">
    <property type="entry name" value="UPF0102 PROTEIN YRAN"/>
    <property type="match status" value="1"/>
</dbReference>
<dbReference type="Pfam" id="PF02021">
    <property type="entry name" value="UPF0102"/>
    <property type="match status" value="1"/>
</dbReference>
<dbReference type="SUPFAM" id="SSF52980">
    <property type="entry name" value="Restriction endonuclease-like"/>
    <property type="match status" value="1"/>
</dbReference>
<reference key="1">
    <citation type="journal article" date="2009" name="PLoS Pathog.">
        <title>Molecular evolutionary consequences of niche restriction in Francisella tularensis, a facultative intracellular pathogen.</title>
        <authorList>
            <person name="Larsson P."/>
            <person name="Elfsmark D."/>
            <person name="Svensson K."/>
            <person name="Wikstroem P."/>
            <person name="Forsman M."/>
            <person name="Brettin T."/>
            <person name="Keim P."/>
            <person name="Johansson A."/>
        </authorList>
    </citation>
    <scope>NUCLEOTIDE SEQUENCE [LARGE SCALE GENOMIC DNA]</scope>
    <source>
        <strain>FSC147</strain>
    </source>
</reference>
<evidence type="ECO:0000255" key="1">
    <source>
        <dbReference type="HAMAP-Rule" id="MF_00048"/>
    </source>
</evidence>
<protein>
    <recommendedName>
        <fullName evidence="1">UPF0102 protein FTM_0486</fullName>
    </recommendedName>
</protein>
<proteinExistence type="inferred from homology"/>
<sequence length="117" mass="13544">MQTIEIGNKAELQACKFLHTQALEILAHNFKALPYGEIDIIALDKDTLVFIEVKYRSKTKFAQAEEMLTYSKQQKLVNSASIYLQHNPQYQDYQCRFDLIAINESNINWIKNAFGVI</sequence>
<organism>
    <name type="scientific">Francisella tularensis subsp. mediasiatica (strain FSC147)</name>
    <dbReference type="NCBI Taxonomy" id="441952"/>
    <lineage>
        <taxon>Bacteria</taxon>
        <taxon>Pseudomonadati</taxon>
        <taxon>Pseudomonadota</taxon>
        <taxon>Gammaproteobacteria</taxon>
        <taxon>Thiotrichales</taxon>
        <taxon>Francisellaceae</taxon>
        <taxon>Francisella</taxon>
    </lineage>
</organism>
<feature type="chain" id="PRO_1000091241" description="UPF0102 protein FTM_0486">
    <location>
        <begin position="1"/>
        <end position="117"/>
    </location>
</feature>